<organism>
    <name type="scientific">Gallid herpesvirus 2 (strain Chicken/Md5/ATCC VR-987)</name>
    <name type="common">GaHV-2</name>
    <name type="synonym">Marek's disease herpesvirus type 1</name>
    <dbReference type="NCBI Taxonomy" id="10389"/>
    <lineage>
        <taxon>Viruses</taxon>
        <taxon>Duplodnaviria</taxon>
        <taxon>Heunggongvirae</taxon>
        <taxon>Peploviricota</taxon>
        <taxon>Herviviricetes</taxon>
        <taxon>Herpesvirales</taxon>
        <taxon>Orthoherpesviridae</taxon>
        <taxon>Alphaherpesvirinae</taxon>
        <taxon>Mardivirus</taxon>
        <taxon>Mardivirus gallidalpha2</taxon>
        <taxon>Gallid alphaherpesvirus 2</taxon>
    </lineage>
</organism>
<name>UL24_GAHVM</name>
<organismHost>
    <name type="scientific">Gallus gallus</name>
    <name type="common">Chicken</name>
    <dbReference type="NCBI Taxonomy" id="9031"/>
</organismHost>
<accession>Q9E6P4</accession>
<gene>
    <name type="primary">MDV035</name>
</gene>
<protein>
    <recommendedName>
        <fullName>Protein UL24 homolog</fullName>
    </recommendedName>
</protein>
<evidence type="ECO:0000250" key="1"/>
<evidence type="ECO:0000305" key="2"/>
<comment type="function">
    <text evidence="1">May play a role in the dispersal of host nucleolin from the nucleolus throughout the nucleus leading to a decrease in ribosome biogenesis.</text>
</comment>
<comment type="subcellular location">
    <subcellularLocation>
        <location>Host cytoplasm</location>
    </subcellularLocation>
    <subcellularLocation>
        <location>Host nucleus</location>
    </subcellularLocation>
    <subcellularLocation>
        <location evidence="1">Host Golgi apparatus</location>
    </subcellularLocation>
</comment>
<comment type="similarity">
    <text evidence="2">Belongs to the HHV-1 UL24 protein family.</text>
</comment>
<keyword id="KW-1035">Host cytoplasm</keyword>
<keyword id="KW-1079">Host G2/M cell cycle arrest by virus</keyword>
<keyword id="KW-1040">Host Golgi apparatus</keyword>
<keyword id="KW-1048">Host nucleus</keyword>
<keyword id="KW-0945">Host-virus interaction</keyword>
<keyword id="KW-1121">Modulation of host cell cycle by virus</keyword>
<keyword id="KW-1185">Reference proteome</keyword>
<proteinExistence type="inferred from homology"/>
<dbReference type="EMBL" id="AF243438">
    <property type="protein sequence ID" value="AAG14215.1"/>
    <property type="molecule type" value="Genomic_DNA"/>
</dbReference>
<dbReference type="RefSeq" id="YP_001033952.1">
    <property type="nucleotide sequence ID" value="NC_002229.3"/>
</dbReference>
<dbReference type="GeneID" id="4811498"/>
<dbReference type="KEGG" id="vg:4811498"/>
<dbReference type="Proteomes" id="UP000008072">
    <property type="component" value="Segment"/>
</dbReference>
<dbReference type="GO" id="GO:0044177">
    <property type="term" value="C:host cell Golgi apparatus"/>
    <property type="evidence" value="ECO:0007669"/>
    <property type="project" value="UniProtKB-SubCell"/>
</dbReference>
<dbReference type="GO" id="GO:0042025">
    <property type="term" value="C:host cell nucleus"/>
    <property type="evidence" value="ECO:0007669"/>
    <property type="project" value="UniProtKB-SubCell"/>
</dbReference>
<dbReference type="GO" id="GO:0039592">
    <property type="term" value="P:symbiont-mediated arrest of host cell cycle during G2/M transition"/>
    <property type="evidence" value="ECO:0007669"/>
    <property type="project" value="UniProtKB-KW"/>
</dbReference>
<dbReference type="InterPro" id="IPR002580">
    <property type="entry name" value="Herpes_UL24"/>
</dbReference>
<dbReference type="Pfam" id="PF01646">
    <property type="entry name" value="Herpes_UL24"/>
    <property type="match status" value="1"/>
</dbReference>
<feature type="chain" id="PRO_0000406546" description="Protein UL24 homolog">
    <location>
        <begin position="1"/>
        <end position="304"/>
    </location>
</feature>
<reference key="1">
    <citation type="journal article" date="2000" name="J. Virol.">
        <title>The genome of a very virulent Marek's disease virus.</title>
        <authorList>
            <person name="Tulman E.R."/>
            <person name="Afonso C.L."/>
            <person name="Lu Z."/>
            <person name="Zsak L."/>
            <person name="Rock D.L."/>
            <person name="Kutish G.F."/>
        </authorList>
    </citation>
    <scope>NUCLEOTIDE SEQUENCE [LARGE SCALE GENOMIC DNA]</scope>
</reference>
<sequence length="304" mass="34920">MSSEMPLPTTIVAPTCSMGEKNVLKRYRRQVSSTRNFKRHVNTNVLRKRRLAAGVRCHDRFYKRLYAEAMCLGSQVYDWPGRSFAKIFGKVMVLDVFKQLTDFRLVFEVNLERRRPDCICMFKLPRDLWEVGCDGVCVILELKTCKFSRNLKTRSKHEQRLTGIKQLLDSKSLIGQIAPQGSDCIVICPMLVFVARRKLSVLHVMCLKKRHIVTDFHRLCSILATASDYKARITDTHKILKRHNTNTIHIQRRSGKASANVTDLRNHIACNKTATLSFSNNQERTGGTAMRNMANIIARLVQRP</sequence>